<feature type="chain" id="PRO_1000091943" description="DNA-directed RNA polymerase subunit alpha">
    <location>
        <begin position="1"/>
        <end position="327"/>
    </location>
</feature>
<feature type="region of interest" description="Alpha N-terminal domain (alpha-NTD)" evidence="1">
    <location>
        <begin position="1"/>
        <end position="233"/>
    </location>
</feature>
<feature type="region of interest" description="Alpha C-terminal domain (alpha-CTD)" evidence="1">
    <location>
        <begin position="247"/>
        <end position="327"/>
    </location>
</feature>
<reference key="1">
    <citation type="journal article" date="2009" name="Infect. Immun.">
        <title>Comparative genomics reveal extensive transposon-mediated genomic plasticity and diversity among potential effector proteins within the genus Coxiella.</title>
        <authorList>
            <person name="Beare P.A."/>
            <person name="Unsworth N."/>
            <person name="Andoh M."/>
            <person name="Voth D.E."/>
            <person name="Omsland A."/>
            <person name="Gilk S.D."/>
            <person name="Williams K.P."/>
            <person name="Sobral B.W."/>
            <person name="Kupko J.J. III"/>
            <person name="Porcella S.F."/>
            <person name="Samuel J.E."/>
            <person name="Heinzen R.A."/>
        </authorList>
    </citation>
    <scope>NUCLEOTIDE SEQUENCE [LARGE SCALE GENOMIC DNA]</scope>
    <source>
        <strain>CbuG_Q212</strain>
    </source>
</reference>
<proteinExistence type="inferred from homology"/>
<sequence>MQNVLKSFLTPKNIQVQTISPCHFRILLEPLERGFGHTLGNALRRILLSSMPGAAIVQAEIDGVLHEYSSIEGVREDVVDVLLNLKGVAIKLEGREDAKLTLHKKGAGTVTAGDIQTESGVKIVNPDHVIAHITKDGEINMTLKAAMGRGYEPSSARSTGDQSRSVGLLLLDASYSPIRRVTYSVENARVEKRTDLDKLIIDLETDGTLDPEEAIRFAAAVLQHQLAAFVDLKQESDRDGGGKEGKVNPLLLRPVEDLELTVRAANCLKAESINYIGDLVQCTENDLLKTPNLGKKSLLEIKSVLAQKGLSLGMDLKGWPPADLTDQ</sequence>
<comment type="function">
    <text evidence="1">DNA-dependent RNA polymerase catalyzes the transcription of DNA into RNA using the four ribonucleoside triphosphates as substrates.</text>
</comment>
<comment type="catalytic activity">
    <reaction evidence="1">
        <text>RNA(n) + a ribonucleoside 5'-triphosphate = RNA(n+1) + diphosphate</text>
        <dbReference type="Rhea" id="RHEA:21248"/>
        <dbReference type="Rhea" id="RHEA-COMP:14527"/>
        <dbReference type="Rhea" id="RHEA-COMP:17342"/>
        <dbReference type="ChEBI" id="CHEBI:33019"/>
        <dbReference type="ChEBI" id="CHEBI:61557"/>
        <dbReference type="ChEBI" id="CHEBI:140395"/>
        <dbReference type="EC" id="2.7.7.6"/>
    </reaction>
</comment>
<comment type="subunit">
    <text evidence="1">Homodimer. The RNAP catalytic core consists of 2 alpha, 1 beta, 1 beta' and 1 omega subunit. When a sigma factor is associated with the core the holoenzyme is formed, which can initiate transcription.</text>
</comment>
<comment type="domain">
    <text evidence="1">The N-terminal domain is essential for RNAP assembly and basal transcription, whereas the C-terminal domain is involved in interaction with transcriptional regulators and with upstream promoter elements.</text>
</comment>
<comment type="similarity">
    <text evidence="1">Belongs to the RNA polymerase alpha chain family.</text>
</comment>
<dbReference type="EC" id="2.7.7.6" evidence="1"/>
<dbReference type="EMBL" id="CP001019">
    <property type="protein sequence ID" value="ACJ19016.1"/>
    <property type="molecule type" value="Genomic_DNA"/>
</dbReference>
<dbReference type="RefSeq" id="WP_005771496.1">
    <property type="nucleotide sequence ID" value="NC_011527.1"/>
</dbReference>
<dbReference type="SMR" id="B6J238"/>
<dbReference type="KEGG" id="cbg:CbuG_1742"/>
<dbReference type="HOGENOM" id="CLU_053084_0_0_6"/>
<dbReference type="GO" id="GO:0005737">
    <property type="term" value="C:cytoplasm"/>
    <property type="evidence" value="ECO:0007669"/>
    <property type="project" value="UniProtKB-ARBA"/>
</dbReference>
<dbReference type="GO" id="GO:0000428">
    <property type="term" value="C:DNA-directed RNA polymerase complex"/>
    <property type="evidence" value="ECO:0007669"/>
    <property type="project" value="UniProtKB-KW"/>
</dbReference>
<dbReference type="GO" id="GO:0003677">
    <property type="term" value="F:DNA binding"/>
    <property type="evidence" value="ECO:0007669"/>
    <property type="project" value="UniProtKB-UniRule"/>
</dbReference>
<dbReference type="GO" id="GO:0003899">
    <property type="term" value="F:DNA-directed RNA polymerase activity"/>
    <property type="evidence" value="ECO:0007669"/>
    <property type="project" value="UniProtKB-UniRule"/>
</dbReference>
<dbReference type="GO" id="GO:0046983">
    <property type="term" value="F:protein dimerization activity"/>
    <property type="evidence" value="ECO:0007669"/>
    <property type="project" value="InterPro"/>
</dbReference>
<dbReference type="GO" id="GO:0006351">
    <property type="term" value="P:DNA-templated transcription"/>
    <property type="evidence" value="ECO:0007669"/>
    <property type="project" value="UniProtKB-UniRule"/>
</dbReference>
<dbReference type="CDD" id="cd06928">
    <property type="entry name" value="RNAP_alpha_NTD"/>
    <property type="match status" value="1"/>
</dbReference>
<dbReference type="FunFam" id="1.10.150.20:FF:000001">
    <property type="entry name" value="DNA-directed RNA polymerase subunit alpha"/>
    <property type="match status" value="1"/>
</dbReference>
<dbReference type="FunFam" id="2.170.120.12:FF:000001">
    <property type="entry name" value="DNA-directed RNA polymerase subunit alpha"/>
    <property type="match status" value="1"/>
</dbReference>
<dbReference type="Gene3D" id="1.10.150.20">
    <property type="entry name" value="5' to 3' exonuclease, C-terminal subdomain"/>
    <property type="match status" value="1"/>
</dbReference>
<dbReference type="Gene3D" id="2.170.120.12">
    <property type="entry name" value="DNA-directed RNA polymerase, insert domain"/>
    <property type="match status" value="1"/>
</dbReference>
<dbReference type="Gene3D" id="3.30.1360.10">
    <property type="entry name" value="RNA polymerase, RBP11-like subunit"/>
    <property type="match status" value="1"/>
</dbReference>
<dbReference type="HAMAP" id="MF_00059">
    <property type="entry name" value="RNApol_bact_RpoA"/>
    <property type="match status" value="1"/>
</dbReference>
<dbReference type="InterPro" id="IPR011262">
    <property type="entry name" value="DNA-dir_RNA_pol_insert"/>
</dbReference>
<dbReference type="InterPro" id="IPR011263">
    <property type="entry name" value="DNA-dir_RNA_pol_RpoA/D/Rpb3"/>
</dbReference>
<dbReference type="InterPro" id="IPR011773">
    <property type="entry name" value="DNA-dir_RpoA"/>
</dbReference>
<dbReference type="InterPro" id="IPR036603">
    <property type="entry name" value="RBP11-like"/>
</dbReference>
<dbReference type="InterPro" id="IPR011260">
    <property type="entry name" value="RNAP_asu_C"/>
</dbReference>
<dbReference type="InterPro" id="IPR036643">
    <property type="entry name" value="RNApol_insert_sf"/>
</dbReference>
<dbReference type="NCBIfam" id="NF003513">
    <property type="entry name" value="PRK05182.1-2"/>
    <property type="match status" value="1"/>
</dbReference>
<dbReference type="NCBIfam" id="NF003519">
    <property type="entry name" value="PRK05182.2-5"/>
    <property type="match status" value="1"/>
</dbReference>
<dbReference type="NCBIfam" id="TIGR02027">
    <property type="entry name" value="rpoA"/>
    <property type="match status" value="1"/>
</dbReference>
<dbReference type="Pfam" id="PF01000">
    <property type="entry name" value="RNA_pol_A_bac"/>
    <property type="match status" value="1"/>
</dbReference>
<dbReference type="Pfam" id="PF03118">
    <property type="entry name" value="RNA_pol_A_CTD"/>
    <property type="match status" value="1"/>
</dbReference>
<dbReference type="Pfam" id="PF01193">
    <property type="entry name" value="RNA_pol_L"/>
    <property type="match status" value="1"/>
</dbReference>
<dbReference type="SMART" id="SM00662">
    <property type="entry name" value="RPOLD"/>
    <property type="match status" value="1"/>
</dbReference>
<dbReference type="SUPFAM" id="SSF47789">
    <property type="entry name" value="C-terminal domain of RNA polymerase alpha subunit"/>
    <property type="match status" value="1"/>
</dbReference>
<dbReference type="SUPFAM" id="SSF56553">
    <property type="entry name" value="Insert subdomain of RNA polymerase alpha subunit"/>
    <property type="match status" value="1"/>
</dbReference>
<dbReference type="SUPFAM" id="SSF55257">
    <property type="entry name" value="RBP11-like subunits of RNA polymerase"/>
    <property type="match status" value="1"/>
</dbReference>
<accession>B6J238</accession>
<protein>
    <recommendedName>
        <fullName evidence="1">DNA-directed RNA polymerase subunit alpha</fullName>
        <shortName evidence="1">RNAP subunit alpha</shortName>
        <ecNumber evidence="1">2.7.7.6</ecNumber>
    </recommendedName>
    <alternativeName>
        <fullName evidence="1">RNA polymerase subunit alpha</fullName>
    </alternativeName>
    <alternativeName>
        <fullName evidence="1">Transcriptase subunit alpha</fullName>
    </alternativeName>
</protein>
<name>RPOA_COXB2</name>
<organism>
    <name type="scientific">Coxiella burnetii (strain CbuG_Q212)</name>
    <name type="common">Coxiella burnetii (strain Q212)</name>
    <dbReference type="NCBI Taxonomy" id="434923"/>
    <lineage>
        <taxon>Bacteria</taxon>
        <taxon>Pseudomonadati</taxon>
        <taxon>Pseudomonadota</taxon>
        <taxon>Gammaproteobacteria</taxon>
        <taxon>Legionellales</taxon>
        <taxon>Coxiellaceae</taxon>
        <taxon>Coxiella</taxon>
    </lineage>
</organism>
<evidence type="ECO:0000255" key="1">
    <source>
        <dbReference type="HAMAP-Rule" id="MF_00059"/>
    </source>
</evidence>
<keyword id="KW-0240">DNA-directed RNA polymerase</keyword>
<keyword id="KW-0548">Nucleotidyltransferase</keyword>
<keyword id="KW-0804">Transcription</keyword>
<keyword id="KW-0808">Transferase</keyword>
<gene>
    <name evidence="1" type="primary">rpoA</name>
    <name type="ordered locus">CbuG_1742</name>
</gene>